<dbReference type="EMBL" id="AE004439">
    <property type="protein sequence ID" value="AAK03743.1"/>
    <property type="molecule type" value="Genomic_DNA"/>
</dbReference>
<dbReference type="SMR" id="Q9CKG0"/>
<dbReference type="STRING" id="272843.PM1659"/>
<dbReference type="EnsemblBacteria" id="AAK03743">
    <property type="protein sequence ID" value="AAK03743"/>
    <property type="gene ID" value="PM1659"/>
</dbReference>
<dbReference type="KEGG" id="pmu:PM1659"/>
<dbReference type="HOGENOM" id="CLU_160655_4_0_6"/>
<dbReference type="Proteomes" id="UP000000809">
    <property type="component" value="Chromosome"/>
</dbReference>
<dbReference type="GO" id="GO:0005829">
    <property type="term" value="C:cytosol"/>
    <property type="evidence" value="ECO:0007669"/>
    <property type="project" value="TreeGrafter"/>
</dbReference>
<dbReference type="GO" id="GO:0015935">
    <property type="term" value="C:small ribosomal subunit"/>
    <property type="evidence" value="ECO:0007669"/>
    <property type="project" value="TreeGrafter"/>
</dbReference>
<dbReference type="GO" id="GO:0070181">
    <property type="term" value="F:small ribosomal subunit rRNA binding"/>
    <property type="evidence" value="ECO:0007669"/>
    <property type="project" value="TreeGrafter"/>
</dbReference>
<dbReference type="GO" id="GO:0003735">
    <property type="term" value="F:structural constituent of ribosome"/>
    <property type="evidence" value="ECO:0007669"/>
    <property type="project" value="InterPro"/>
</dbReference>
<dbReference type="GO" id="GO:0006412">
    <property type="term" value="P:translation"/>
    <property type="evidence" value="ECO:0007669"/>
    <property type="project" value="UniProtKB-UniRule"/>
</dbReference>
<dbReference type="FunFam" id="1.20.58.110:FF:000001">
    <property type="entry name" value="30S ribosomal protein S20"/>
    <property type="match status" value="1"/>
</dbReference>
<dbReference type="Gene3D" id="1.20.58.110">
    <property type="entry name" value="Ribosomal protein S20"/>
    <property type="match status" value="1"/>
</dbReference>
<dbReference type="HAMAP" id="MF_00500">
    <property type="entry name" value="Ribosomal_bS20"/>
    <property type="match status" value="1"/>
</dbReference>
<dbReference type="InterPro" id="IPR002583">
    <property type="entry name" value="Ribosomal_bS20"/>
</dbReference>
<dbReference type="InterPro" id="IPR036510">
    <property type="entry name" value="Ribosomal_bS20_sf"/>
</dbReference>
<dbReference type="NCBIfam" id="TIGR00029">
    <property type="entry name" value="S20"/>
    <property type="match status" value="1"/>
</dbReference>
<dbReference type="PANTHER" id="PTHR33398">
    <property type="entry name" value="30S RIBOSOMAL PROTEIN S20"/>
    <property type="match status" value="1"/>
</dbReference>
<dbReference type="PANTHER" id="PTHR33398:SF1">
    <property type="entry name" value="SMALL RIBOSOMAL SUBUNIT PROTEIN BS20C"/>
    <property type="match status" value="1"/>
</dbReference>
<dbReference type="Pfam" id="PF01649">
    <property type="entry name" value="Ribosomal_S20p"/>
    <property type="match status" value="1"/>
</dbReference>
<dbReference type="SUPFAM" id="SSF46992">
    <property type="entry name" value="Ribosomal protein S20"/>
    <property type="match status" value="1"/>
</dbReference>
<proteinExistence type="inferred from homology"/>
<evidence type="ECO:0000255" key="1">
    <source>
        <dbReference type="HAMAP-Rule" id="MF_00500"/>
    </source>
</evidence>
<evidence type="ECO:0000256" key="2">
    <source>
        <dbReference type="SAM" id="MobiDB-lite"/>
    </source>
</evidence>
<evidence type="ECO:0000305" key="3"/>
<accession>Q9CKG0</accession>
<comment type="function">
    <text evidence="1">Binds directly to 16S ribosomal RNA.</text>
</comment>
<comment type="similarity">
    <text evidence="1">Belongs to the bacterial ribosomal protein bS20 family.</text>
</comment>
<name>RS20_PASMU</name>
<organism>
    <name type="scientific">Pasteurella multocida (strain Pm70)</name>
    <dbReference type="NCBI Taxonomy" id="272843"/>
    <lineage>
        <taxon>Bacteria</taxon>
        <taxon>Pseudomonadati</taxon>
        <taxon>Pseudomonadota</taxon>
        <taxon>Gammaproteobacteria</taxon>
        <taxon>Pasteurellales</taxon>
        <taxon>Pasteurellaceae</taxon>
        <taxon>Pasteurella</taxon>
    </lineage>
</organism>
<reference key="1">
    <citation type="journal article" date="2001" name="Proc. Natl. Acad. Sci. U.S.A.">
        <title>Complete genomic sequence of Pasteurella multocida Pm70.</title>
        <authorList>
            <person name="May B.J."/>
            <person name="Zhang Q."/>
            <person name="Li L.L."/>
            <person name="Paustian M.L."/>
            <person name="Whittam T.S."/>
            <person name="Kapur V."/>
        </authorList>
    </citation>
    <scope>NUCLEOTIDE SEQUENCE [LARGE SCALE GENOMIC DNA]</scope>
    <source>
        <strain>Pm70</strain>
    </source>
</reference>
<keyword id="KW-1185">Reference proteome</keyword>
<keyword id="KW-0687">Ribonucleoprotein</keyword>
<keyword id="KW-0689">Ribosomal protein</keyword>
<keyword id="KW-0694">RNA-binding</keyword>
<keyword id="KW-0699">rRNA-binding</keyword>
<sequence length="89" mass="9867">MTLANIKSAKKRAIQSEKRRQHNASQRSMMRTYIKKVYAAVAAGDKSVAEKAFVEMQKVVDRMASKGLIHANKAANHKANLSAQIKKLA</sequence>
<feature type="chain" id="PRO_0000168005" description="Small ribosomal subunit protein bS20">
    <location>
        <begin position="1"/>
        <end position="89"/>
    </location>
</feature>
<feature type="region of interest" description="Disordered" evidence="2">
    <location>
        <begin position="1"/>
        <end position="28"/>
    </location>
</feature>
<gene>
    <name evidence="1" type="primary">rpsT</name>
    <name evidence="1" type="synonym">rps20</name>
    <name type="ordered locus">PM1659</name>
</gene>
<protein>
    <recommendedName>
        <fullName evidence="1">Small ribosomal subunit protein bS20</fullName>
    </recommendedName>
    <alternativeName>
        <fullName evidence="3">30S ribosomal protein S20</fullName>
    </alternativeName>
</protein>